<sequence length="737" mass="82441">MDAEKATDKTNVHLSSDHERCPVEEVALVVPETDDPSLPVMTFRAWFLGLTSCVLLIFLNTFFTYRTQPLTISAILMQIAVLPIGKFMARTLPTTSHNLLGWSFSLNPGPFNIKEHVIITIFANCGVAYGGGDAYSIGAITVMKAYYKQSLSFICGLFIVLTTQILGYGWAGILRRYLVDPVDMWWPSNLAQVSLFRALHEKENKSKGLTRMKFFLVALGASFIYYALPGYLFPILTFFSWVCWAWPNSITAQQVGSGYHGLGVGAFTLDWAGISAYHGSPLVAPWSSILNVGVGFIMFIYIIVPVCYWKFNTFDARKFPIFSNQLFTTSGQKYDTTKILTPQFDLDIGAYNNYGKLYLSPLFALSIGSGFARFTATLTHVALFNGRDIWKQTWSAVNTTKLDIHGKLMQSYKKVPEWWFYILLAGSVAMSLLMSFVWKESVQLPWWGMLFAFALAFIVTLPIGVIQATTNQQPGYDIIGQFIIGYILPGKPIANLIFKIYGRISTVHALSFLADLKLGHYMKIPPRCMYTAQLVGTVVAGVVNLGVAWWMLESIQDICDIEGDHPNSPWTCPKYRVTFDASVIWGLIGPRRLFGPGGMYRNLVWLFLIGAVLPVPVWALSKIFPNKKWIPLINIPVISYGFAGMPPATPTNIASWLVTGTIFNYFVFNYHKRWWQKYNYVLSAALDAGTAFMGVLLFFALQNAGHDLKWWGTEVDHCPLASCPTAPGIKAKGCPVF</sequence>
<organism>
    <name type="scientific">Arabidopsis thaliana</name>
    <name type="common">Mouse-ear cress</name>
    <dbReference type="NCBI Taxonomy" id="3702"/>
    <lineage>
        <taxon>Eukaryota</taxon>
        <taxon>Viridiplantae</taxon>
        <taxon>Streptophyta</taxon>
        <taxon>Embryophyta</taxon>
        <taxon>Tracheophyta</taxon>
        <taxon>Spermatophyta</taxon>
        <taxon>Magnoliopsida</taxon>
        <taxon>eudicotyledons</taxon>
        <taxon>Gunneridae</taxon>
        <taxon>Pentapetalae</taxon>
        <taxon>rosids</taxon>
        <taxon>malvids</taxon>
        <taxon>Brassicales</taxon>
        <taxon>Brassicaceae</taxon>
        <taxon>Camelineae</taxon>
        <taxon>Arabidopsis</taxon>
    </lineage>
</organism>
<feature type="chain" id="PRO_0000213780" description="Oligopeptide transporter 3">
    <location>
        <begin position="1"/>
        <end position="737"/>
    </location>
</feature>
<feature type="transmembrane region" description="Helical" evidence="1">
    <location>
        <begin position="45"/>
        <end position="65"/>
    </location>
</feature>
<feature type="transmembrane region" description="Helical" evidence="1">
    <location>
        <begin position="69"/>
        <end position="89"/>
    </location>
</feature>
<feature type="transmembrane region" description="Helical" evidence="1">
    <location>
        <begin position="117"/>
        <end position="137"/>
    </location>
</feature>
<feature type="transmembrane region" description="Helical" evidence="1">
    <location>
        <begin position="153"/>
        <end position="173"/>
    </location>
</feature>
<feature type="transmembrane region" description="Helical" evidence="1">
    <location>
        <begin position="215"/>
        <end position="235"/>
    </location>
</feature>
<feature type="transmembrane region" description="Helical" evidence="1">
    <location>
        <begin position="255"/>
        <end position="275"/>
    </location>
</feature>
<feature type="transmembrane region" description="Helical" evidence="1">
    <location>
        <begin position="289"/>
        <end position="309"/>
    </location>
</feature>
<feature type="transmembrane region" description="Helical" evidence="1">
    <location>
        <begin position="357"/>
        <end position="377"/>
    </location>
</feature>
<feature type="transmembrane region" description="Helical" evidence="1">
    <location>
        <begin position="418"/>
        <end position="438"/>
    </location>
</feature>
<feature type="transmembrane region" description="Helical" evidence="1">
    <location>
        <begin position="446"/>
        <end position="466"/>
    </location>
</feature>
<feature type="transmembrane region" description="Helical" evidence="1">
    <location>
        <begin position="478"/>
        <end position="498"/>
    </location>
</feature>
<feature type="transmembrane region" description="Helical" evidence="1">
    <location>
        <begin position="532"/>
        <end position="552"/>
    </location>
</feature>
<feature type="transmembrane region" description="Helical" evidence="1">
    <location>
        <begin position="604"/>
        <end position="624"/>
    </location>
</feature>
<feature type="transmembrane region" description="Helical" evidence="1">
    <location>
        <begin position="629"/>
        <end position="649"/>
    </location>
</feature>
<feature type="transmembrane region" description="Helical" evidence="1">
    <location>
        <begin position="650"/>
        <end position="670"/>
    </location>
</feature>
<feature type="transmembrane region" description="Helical" evidence="1">
    <location>
        <begin position="681"/>
        <end position="701"/>
    </location>
</feature>
<feature type="sequence conflict" description="In Ref. 4; AAK96781." evidence="5" ref="4">
    <original>A</original>
    <variation>T</variation>
    <location>
        <position position="45"/>
    </location>
</feature>
<feature type="sequence conflict" description="In Ref. 1; CAB10414 and 2; CAB78679." evidence="5" ref="1 2">
    <original>V</original>
    <variation>G</variation>
    <location>
        <position position="81"/>
    </location>
</feature>
<feature type="sequence conflict" description="In Ref. 1; CAB10414 and 2; CAB78679." evidence="5" ref="1 2">
    <original>F</original>
    <variation>S</variation>
    <location>
        <position position="239"/>
    </location>
</feature>
<feature type="sequence conflict" description="In Ref. 1; CAB10414 and 2; CAB78679." evidence="5" ref="1 2">
    <original>F</original>
    <variation>S</variation>
    <location>
        <position position="322"/>
    </location>
</feature>
<feature type="sequence conflict" description="In Ref. 1; CAB10414 and 2; CAB78679." evidence="5" ref="1 2">
    <original>R</original>
    <variation>P</variation>
    <location>
        <position position="527"/>
    </location>
</feature>
<feature type="sequence conflict" description="In Ref. 1; CAB10414 and 2; CAB78679." evidence="5" ref="1 2">
    <original>WL</original>
    <variation>GF</variation>
    <location>
        <begin position="605"/>
        <end position="606"/>
    </location>
</feature>
<feature type="sequence conflict" description="In Ref. 3; AEE83738." evidence="5" ref="3">
    <original>W</original>
    <variation>G</variation>
    <location>
        <position position="605"/>
    </location>
</feature>
<reference key="1">
    <citation type="journal article" date="1998" name="Nature">
        <title>Analysis of 1.9 Mb of contiguous sequence from chromosome 4 of Arabidopsis thaliana.</title>
        <authorList>
            <person name="Bevan M."/>
            <person name="Bancroft I."/>
            <person name="Bent E."/>
            <person name="Love K."/>
            <person name="Goodman H.M."/>
            <person name="Dean C."/>
            <person name="Bergkamp R."/>
            <person name="Dirkse W."/>
            <person name="van Staveren M."/>
            <person name="Stiekema W."/>
            <person name="Drost L."/>
            <person name="Ridley P."/>
            <person name="Hudson S.-A."/>
            <person name="Patel K."/>
            <person name="Murphy G."/>
            <person name="Piffanelli P."/>
            <person name="Wedler H."/>
            <person name="Wedler E."/>
            <person name="Wambutt R."/>
            <person name="Weitzenegger T."/>
            <person name="Pohl T."/>
            <person name="Terryn N."/>
            <person name="Gielen J."/>
            <person name="Villarroel R."/>
            <person name="De Clercq R."/>
            <person name="van Montagu M."/>
            <person name="Lecharny A."/>
            <person name="Aubourg S."/>
            <person name="Gy I."/>
            <person name="Kreis M."/>
            <person name="Lao N."/>
            <person name="Kavanagh T."/>
            <person name="Hempel S."/>
            <person name="Kotter P."/>
            <person name="Entian K.-D."/>
            <person name="Rieger M."/>
            <person name="Schaefer M."/>
            <person name="Funk B."/>
            <person name="Mueller-Auer S."/>
            <person name="Silvey M."/>
            <person name="James R."/>
            <person name="Monfort A."/>
            <person name="Pons A."/>
            <person name="Puigdomenech P."/>
            <person name="Douka A."/>
            <person name="Voukelatou E."/>
            <person name="Milioni D."/>
            <person name="Hatzopoulos P."/>
            <person name="Piravandi E."/>
            <person name="Obermaier B."/>
            <person name="Hilbert H."/>
            <person name="Duesterhoeft A."/>
            <person name="Moores T."/>
            <person name="Jones J.D.G."/>
            <person name="Eneva T."/>
            <person name="Palme K."/>
            <person name="Benes V."/>
            <person name="Rechmann S."/>
            <person name="Ansorge W."/>
            <person name="Cooke R."/>
            <person name="Berger C."/>
            <person name="Delseny M."/>
            <person name="Voet M."/>
            <person name="Volckaert G."/>
            <person name="Mewes H.-W."/>
            <person name="Klosterman S."/>
            <person name="Schueller C."/>
            <person name="Chalwatzis N."/>
        </authorList>
    </citation>
    <scope>NUCLEOTIDE SEQUENCE [LARGE SCALE GENOMIC DNA]</scope>
    <source>
        <strain>cv. Columbia</strain>
    </source>
</reference>
<reference key="2">
    <citation type="journal article" date="1999" name="Nature">
        <title>Sequence and analysis of chromosome 4 of the plant Arabidopsis thaliana.</title>
        <authorList>
            <person name="Mayer K.F.X."/>
            <person name="Schueller C."/>
            <person name="Wambutt R."/>
            <person name="Murphy G."/>
            <person name="Volckaert G."/>
            <person name="Pohl T."/>
            <person name="Duesterhoeft A."/>
            <person name="Stiekema W."/>
            <person name="Entian K.-D."/>
            <person name="Terryn N."/>
            <person name="Harris B."/>
            <person name="Ansorge W."/>
            <person name="Brandt P."/>
            <person name="Grivell L.A."/>
            <person name="Rieger M."/>
            <person name="Weichselgartner M."/>
            <person name="de Simone V."/>
            <person name="Obermaier B."/>
            <person name="Mache R."/>
            <person name="Mueller M."/>
            <person name="Kreis M."/>
            <person name="Delseny M."/>
            <person name="Puigdomenech P."/>
            <person name="Watson M."/>
            <person name="Schmidtheini T."/>
            <person name="Reichert B."/>
            <person name="Portetelle D."/>
            <person name="Perez-Alonso M."/>
            <person name="Boutry M."/>
            <person name="Bancroft I."/>
            <person name="Vos P."/>
            <person name="Hoheisel J."/>
            <person name="Zimmermann W."/>
            <person name="Wedler H."/>
            <person name="Ridley P."/>
            <person name="Langham S.-A."/>
            <person name="McCullagh B."/>
            <person name="Bilham L."/>
            <person name="Robben J."/>
            <person name="van der Schueren J."/>
            <person name="Grymonprez B."/>
            <person name="Chuang Y.-J."/>
            <person name="Vandenbussche F."/>
            <person name="Braeken M."/>
            <person name="Weltjens I."/>
            <person name="Voet M."/>
            <person name="Bastiaens I."/>
            <person name="Aert R."/>
            <person name="Defoor E."/>
            <person name="Weitzenegger T."/>
            <person name="Bothe G."/>
            <person name="Ramsperger U."/>
            <person name="Hilbert H."/>
            <person name="Braun M."/>
            <person name="Holzer E."/>
            <person name="Brandt A."/>
            <person name="Peters S."/>
            <person name="van Staveren M."/>
            <person name="Dirkse W."/>
            <person name="Mooijman P."/>
            <person name="Klein Lankhorst R."/>
            <person name="Rose M."/>
            <person name="Hauf J."/>
            <person name="Koetter P."/>
            <person name="Berneiser S."/>
            <person name="Hempel S."/>
            <person name="Feldpausch M."/>
            <person name="Lamberth S."/>
            <person name="Van den Daele H."/>
            <person name="De Keyser A."/>
            <person name="Buysshaert C."/>
            <person name="Gielen J."/>
            <person name="Villarroel R."/>
            <person name="De Clercq R."/>
            <person name="van Montagu M."/>
            <person name="Rogers J."/>
            <person name="Cronin A."/>
            <person name="Quail M.A."/>
            <person name="Bray-Allen S."/>
            <person name="Clark L."/>
            <person name="Doggett J."/>
            <person name="Hall S."/>
            <person name="Kay M."/>
            <person name="Lennard N."/>
            <person name="McLay K."/>
            <person name="Mayes R."/>
            <person name="Pettett A."/>
            <person name="Rajandream M.A."/>
            <person name="Lyne M."/>
            <person name="Benes V."/>
            <person name="Rechmann S."/>
            <person name="Borkova D."/>
            <person name="Bloecker H."/>
            <person name="Scharfe M."/>
            <person name="Grimm M."/>
            <person name="Loehnert T.-H."/>
            <person name="Dose S."/>
            <person name="de Haan M."/>
            <person name="Maarse A.C."/>
            <person name="Schaefer M."/>
            <person name="Mueller-Auer S."/>
            <person name="Gabel C."/>
            <person name="Fuchs M."/>
            <person name="Fartmann B."/>
            <person name="Granderath K."/>
            <person name="Dauner D."/>
            <person name="Herzl A."/>
            <person name="Neumann S."/>
            <person name="Argiriou A."/>
            <person name="Vitale D."/>
            <person name="Liguori R."/>
            <person name="Piravandi E."/>
            <person name="Massenet O."/>
            <person name="Quigley F."/>
            <person name="Clabauld G."/>
            <person name="Muendlein A."/>
            <person name="Felber R."/>
            <person name="Schnabl S."/>
            <person name="Hiller R."/>
            <person name="Schmidt W."/>
            <person name="Lecharny A."/>
            <person name="Aubourg S."/>
            <person name="Chefdor F."/>
            <person name="Cooke R."/>
            <person name="Berger C."/>
            <person name="Monfort A."/>
            <person name="Casacuberta E."/>
            <person name="Gibbons T."/>
            <person name="Weber N."/>
            <person name="Vandenbol M."/>
            <person name="Bargues M."/>
            <person name="Terol J."/>
            <person name="Torres A."/>
            <person name="Perez-Perez A."/>
            <person name="Purnelle B."/>
            <person name="Bent E."/>
            <person name="Johnson S."/>
            <person name="Tacon D."/>
            <person name="Jesse T."/>
            <person name="Heijnen L."/>
            <person name="Schwarz S."/>
            <person name="Scholler P."/>
            <person name="Heber S."/>
            <person name="Francs P."/>
            <person name="Bielke C."/>
            <person name="Frishman D."/>
            <person name="Haase D."/>
            <person name="Lemcke K."/>
            <person name="Mewes H.-W."/>
            <person name="Stocker S."/>
            <person name="Zaccaria P."/>
            <person name="Bevan M."/>
            <person name="Wilson R.K."/>
            <person name="de la Bastide M."/>
            <person name="Habermann K."/>
            <person name="Parnell L."/>
            <person name="Dedhia N."/>
            <person name="Gnoj L."/>
            <person name="Schutz K."/>
            <person name="Huang E."/>
            <person name="Spiegel L."/>
            <person name="Sekhon M."/>
            <person name="Murray J."/>
            <person name="Sheet P."/>
            <person name="Cordes M."/>
            <person name="Abu-Threideh J."/>
            <person name="Stoneking T."/>
            <person name="Kalicki J."/>
            <person name="Graves T."/>
            <person name="Harmon G."/>
            <person name="Edwards J."/>
            <person name="Latreille P."/>
            <person name="Courtney L."/>
            <person name="Cloud J."/>
            <person name="Abbott A."/>
            <person name="Scott K."/>
            <person name="Johnson D."/>
            <person name="Minx P."/>
            <person name="Bentley D."/>
            <person name="Fulton B."/>
            <person name="Miller N."/>
            <person name="Greco T."/>
            <person name="Kemp K."/>
            <person name="Kramer J."/>
            <person name="Fulton L."/>
            <person name="Mardis E."/>
            <person name="Dante M."/>
            <person name="Pepin K."/>
            <person name="Hillier L.W."/>
            <person name="Nelson J."/>
            <person name="Spieth J."/>
            <person name="Ryan E."/>
            <person name="Andrews S."/>
            <person name="Geisel C."/>
            <person name="Layman D."/>
            <person name="Du H."/>
            <person name="Ali J."/>
            <person name="Berghoff A."/>
            <person name="Jones K."/>
            <person name="Drone K."/>
            <person name="Cotton M."/>
            <person name="Joshu C."/>
            <person name="Antonoiu B."/>
            <person name="Zidanic M."/>
            <person name="Strong C."/>
            <person name="Sun H."/>
            <person name="Lamar B."/>
            <person name="Yordan C."/>
            <person name="Ma P."/>
            <person name="Zhong J."/>
            <person name="Preston R."/>
            <person name="Vil D."/>
            <person name="Shekher M."/>
            <person name="Matero A."/>
            <person name="Shah R."/>
            <person name="Swaby I.K."/>
            <person name="O'Shaughnessy A."/>
            <person name="Rodriguez M."/>
            <person name="Hoffman J."/>
            <person name="Till S."/>
            <person name="Granat S."/>
            <person name="Shohdy N."/>
            <person name="Hasegawa A."/>
            <person name="Hameed A."/>
            <person name="Lodhi M."/>
            <person name="Johnson A."/>
            <person name="Chen E."/>
            <person name="Marra M.A."/>
            <person name="Martienssen R."/>
            <person name="McCombie W.R."/>
        </authorList>
    </citation>
    <scope>NUCLEOTIDE SEQUENCE [LARGE SCALE GENOMIC DNA]</scope>
    <source>
        <strain>cv. Columbia</strain>
    </source>
</reference>
<reference key="3">
    <citation type="journal article" date="2017" name="Plant J.">
        <title>Araport11: a complete reannotation of the Arabidopsis thaliana reference genome.</title>
        <authorList>
            <person name="Cheng C.Y."/>
            <person name="Krishnakumar V."/>
            <person name="Chan A.P."/>
            <person name="Thibaud-Nissen F."/>
            <person name="Schobel S."/>
            <person name="Town C.D."/>
        </authorList>
    </citation>
    <scope>GENOME REANNOTATION</scope>
    <scope>SEQUENCE REVISION</scope>
    <source>
        <strain>cv. Columbia</strain>
    </source>
</reference>
<reference key="4">
    <citation type="journal article" date="2003" name="Science">
        <title>Empirical analysis of transcriptional activity in the Arabidopsis genome.</title>
        <authorList>
            <person name="Yamada K."/>
            <person name="Lim J."/>
            <person name="Dale J.M."/>
            <person name="Chen H."/>
            <person name="Shinn P."/>
            <person name="Palm C.J."/>
            <person name="Southwick A.M."/>
            <person name="Wu H.C."/>
            <person name="Kim C.J."/>
            <person name="Nguyen M."/>
            <person name="Pham P.K."/>
            <person name="Cheuk R.F."/>
            <person name="Karlin-Newmann G."/>
            <person name="Liu S.X."/>
            <person name="Lam B."/>
            <person name="Sakano H."/>
            <person name="Wu T."/>
            <person name="Yu G."/>
            <person name="Miranda M."/>
            <person name="Quach H.L."/>
            <person name="Tripp M."/>
            <person name="Chang C.H."/>
            <person name="Lee J.M."/>
            <person name="Toriumi M.J."/>
            <person name="Chan M.M."/>
            <person name="Tang C.C."/>
            <person name="Onodera C.S."/>
            <person name="Deng J.M."/>
            <person name="Akiyama K."/>
            <person name="Ansari Y."/>
            <person name="Arakawa T."/>
            <person name="Banh J."/>
            <person name="Banno F."/>
            <person name="Bowser L."/>
            <person name="Brooks S.Y."/>
            <person name="Carninci P."/>
            <person name="Chao Q."/>
            <person name="Choy N."/>
            <person name="Enju A."/>
            <person name="Goldsmith A.D."/>
            <person name="Gurjal M."/>
            <person name="Hansen N.F."/>
            <person name="Hayashizaki Y."/>
            <person name="Johnson-Hopson C."/>
            <person name="Hsuan V.W."/>
            <person name="Iida K."/>
            <person name="Karnes M."/>
            <person name="Khan S."/>
            <person name="Koesema E."/>
            <person name="Ishida J."/>
            <person name="Jiang P.X."/>
            <person name="Jones T."/>
            <person name="Kawai J."/>
            <person name="Kamiya A."/>
            <person name="Meyers C."/>
            <person name="Nakajima M."/>
            <person name="Narusaka M."/>
            <person name="Seki M."/>
            <person name="Sakurai T."/>
            <person name="Satou M."/>
            <person name="Tamse R."/>
            <person name="Vaysberg M."/>
            <person name="Wallender E.K."/>
            <person name="Wong C."/>
            <person name="Yamamura Y."/>
            <person name="Yuan S."/>
            <person name="Shinozaki K."/>
            <person name="Davis R.W."/>
            <person name="Theologis A."/>
            <person name="Ecker J.R."/>
        </authorList>
    </citation>
    <scope>NUCLEOTIDE SEQUENCE [LARGE SCALE MRNA]</scope>
    <source>
        <strain>cv. Columbia</strain>
    </source>
</reference>
<reference key="5">
    <citation type="journal article" date="2002" name="Plant Physiol.">
        <title>An oligopeptide transporter gene family in Arabidopsis.</title>
        <authorList>
            <person name="Koh S."/>
            <person name="Wiles A.M."/>
            <person name="Sharp J.S."/>
            <person name="Naider F.R."/>
            <person name="Becker J.M."/>
            <person name="Stacey G."/>
        </authorList>
    </citation>
    <scope>FUNCTION</scope>
    <scope>NOMENCLATURE</scope>
    <scope>TISSUE SPECIFICITY</scope>
</reference>
<reference key="6">
    <citation type="journal article" date="2002" name="Plant Cell">
        <title>AtOPT3, a member of the oligopeptide transporter family, is essential for embryo development in Arabidopsis.</title>
        <authorList>
            <person name="Stacey M.G."/>
            <person name="Koh S."/>
            <person name="Becker J."/>
            <person name="Stacey G."/>
        </authorList>
    </citation>
    <scope>FUNCTION</scope>
    <scope>TISSUE SPECIFICITY</scope>
    <scope>DEVELOPMENTAL STAGE</scope>
</reference>
<reference key="7">
    <citation type="journal article" date="2003" name="J. Biol. Chem.">
        <title>Expression profiles of Arabidopsis thaliana in mineral deficiencies reveal novel transporters involved in metal homeostasis.</title>
        <authorList>
            <person name="Wintz H."/>
            <person name="Fox T."/>
            <person name="Wu Y.-Y."/>
            <person name="Feng V."/>
            <person name="Chen W."/>
            <person name="Chang H.-S."/>
            <person name="Zhu T."/>
            <person name="Vulpe C.D."/>
        </authorList>
    </citation>
    <scope>FUNCTION</scope>
    <scope>INDUCTION</scope>
</reference>
<evidence type="ECO:0000255" key="1"/>
<evidence type="ECO:0000269" key="2">
    <source>
    </source>
</evidence>
<evidence type="ECO:0000269" key="3">
    <source>
    </source>
</evidence>
<evidence type="ECO:0000269" key="4">
    <source>
    </source>
</evidence>
<evidence type="ECO:0000305" key="5"/>
<protein>
    <recommendedName>
        <fullName>Oligopeptide transporter 3</fullName>
        <shortName>AtOPT3</shortName>
    </recommendedName>
</protein>
<name>OPT3_ARATH</name>
<keyword id="KW-0217">Developmental protein</keyword>
<keyword id="KW-0472">Membrane</keyword>
<keyword id="KW-0571">Peptide transport</keyword>
<keyword id="KW-0653">Protein transport</keyword>
<keyword id="KW-1185">Reference proteome</keyword>
<keyword id="KW-0812">Transmembrane</keyword>
<keyword id="KW-1133">Transmembrane helix</keyword>
<keyword id="KW-0813">Transport</keyword>
<gene>
    <name type="primary">OPT3</name>
    <name type="ordered locus">At4g16370</name>
    <name type="ORF">dl4215c</name>
    <name type="ORF">FCAALL.72</name>
</gene>
<comment type="function">
    <text evidence="2 3 4">May be involved in the translocation of tetra- and pentapeptides across the cellular membrane in an energy-dependent manner. Also acts as a metal transporter that could be a component of the copper transport machinery. Essential for early embryo development.</text>
</comment>
<comment type="subcellular location">
    <subcellularLocation>
        <location evidence="5">Membrane</location>
        <topology evidence="5">Multi-pass membrane protein</topology>
    </subcellularLocation>
</comment>
<comment type="tissue specificity">
    <text evidence="2 3">Strong expression in flowers, leaves and roots. Preferentially expressed in the vascular tissues of seedlings and mature plants as well as in pollen and developing embryos.</text>
</comment>
<comment type="developmental stage">
    <text evidence="3">Expressed 2 to 4 hours after fertilization in the embryo sac and subsequently in developing maternal tissues. By the globular stage, expression is observed in the developing endosperm, integument layers, the embryo proper, and the suspensor of the developing embryo. From the heart stage onward, expression observed in the embryo but neither in the suspensor nor in the endosperm and integument tissues.</text>
</comment>
<comment type="induction">
    <text evidence="4">Highly induced by iron, copper and manganese deficiencies.</text>
</comment>
<comment type="similarity">
    <text evidence="5">Belongs to the oligopeptide OPT transporter (TC 2.A.67.1) family.</text>
</comment>
<comment type="sequence caution" evidence="5">
    <conflict type="erroneous gene model prediction">
        <sequence resource="EMBL-CDS" id="CAB10414"/>
    </conflict>
</comment>
<comment type="sequence caution" evidence="5">
    <conflict type="erroneous gene model prediction">
        <sequence resource="EMBL-CDS" id="CAB78679"/>
    </conflict>
</comment>
<proteinExistence type="evidence at transcript level"/>
<dbReference type="EMBL" id="Z97341">
    <property type="protein sequence ID" value="CAB10414.1"/>
    <property type="status" value="ALT_SEQ"/>
    <property type="molecule type" value="Genomic_DNA"/>
</dbReference>
<dbReference type="EMBL" id="AL161543">
    <property type="protein sequence ID" value="CAB78679.1"/>
    <property type="status" value="ALT_SEQ"/>
    <property type="molecule type" value="Genomic_DNA"/>
</dbReference>
<dbReference type="EMBL" id="CP002687">
    <property type="protein sequence ID" value="AEE83738.1"/>
    <property type="molecule type" value="Genomic_DNA"/>
</dbReference>
<dbReference type="EMBL" id="BT002023">
    <property type="protein sequence ID" value="AAN72034.1"/>
    <property type="molecule type" value="mRNA"/>
</dbReference>
<dbReference type="EMBL" id="AY054590">
    <property type="protein sequence ID" value="AAK96781.1"/>
    <property type="molecule type" value="mRNA"/>
</dbReference>
<dbReference type="PIR" id="D71430">
    <property type="entry name" value="D71430"/>
</dbReference>
<dbReference type="RefSeq" id="NP_567493.5">
    <property type="nucleotide sequence ID" value="NM_117732.7"/>
</dbReference>
<dbReference type="FunCoup" id="O23482">
    <property type="interactions" value="182"/>
</dbReference>
<dbReference type="STRING" id="3702.O23482"/>
<dbReference type="TCDB" id="2.A.67.1.7">
    <property type="family name" value="the oligopeptide transporter (opt) family"/>
</dbReference>
<dbReference type="PaxDb" id="3702-AT4G16370.1"/>
<dbReference type="ProteomicsDB" id="248817"/>
<dbReference type="GeneID" id="827332"/>
<dbReference type="KEGG" id="ath:AT4G16370"/>
<dbReference type="Araport" id="AT4G16370"/>
<dbReference type="TAIR" id="AT4G16370"/>
<dbReference type="eggNOG" id="KOG2262">
    <property type="taxonomic scope" value="Eukaryota"/>
</dbReference>
<dbReference type="HOGENOM" id="CLU_004965_0_1_1"/>
<dbReference type="InParanoid" id="O23482"/>
<dbReference type="PRO" id="PR:O23482"/>
<dbReference type="Proteomes" id="UP000006548">
    <property type="component" value="Chromosome 4"/>
</dbReference>
<dbReference type="ExpressionAtlas" id="O23482">
    <property type="expression patterns" value="baseline and differential"/>
</dbReference>
<dbReference type="GO" id="GO:0005829">
    <property type="term" value="C:cytosol"/>
    <property type="evidence" value="ECO:0007005"/>
    <property type="project" value="TAIR"/>
</dbReference>
<dbReference type="GO" id="GO:0016020">
    <property type="term" value="C:membrane"/>
    <property type="evidence" value="ECO:0000250"/>
    <property type="project" value="TAIR"/>
</dbReference>
<dbReference type="GO" id="GO:0005886">
    <property type="term" value="C:plasma membrane"/>
    <property type="evidence" value="ECO:0000314"/>
    <property type="project" value="TAIR"/>
</dbReference>
<dbReference type="GO" id="GO:0009506">
    <property type="term" value="C:plasmodesma"/>
    <property type="evidence" value="ECO:0007005"/>
    <property type="project" value="TAIR"/>
</dbReference>
<dbReference type="GO" id="GO:0035673">
    <property type="term" value="F:oligopeptide transmembrane transporter activity"/>
    <property type="evidence" value="ECO:0000318"/>
    <property type="project" value="GO_Central"/>
</dbReference>
<dbReference type="GO" id="GO:0046915">
    <property type="term" value="F:transition metal ion transmembrane transporter activity"/>
    <property type="evidence" value="ECO:0000314"/>
    <property type="project" value="TAIR"/>
</dbReference>
<dbReference type="GO" id="GO:0015031">
    <property type="term" value="P:protein transport"/>
    <property type="evidence" value="ECO:0007669"/>
    <property type="project" value="UniProtKB-KW"/>
</dbReference>
<dbReference type="GO" id="GO:1990388">
    <property type="term" value="P:xylem-to-phloem iron transport"/>
    <property type="evidence" value="ECO:0000270"/>
    <property type="project" value="TAIR"/>
</dbReference>
<dbReference type="InterPro" id="IPR004648">
    <property type="entry name" value="Oligpept_transpt"/>
</dbReference>
<dbReference type="InterPro" id="IPR004813">
    <property type="entry name" value="OPT"/>
</dbReference>
<dbReference type="NCBIfam" id="TIGR00727">
    <property type="entry name" value="ISP4_OPT"/>
    <property type="match status" value="1"/>
</dbReference>
<dbReference type="NCBIfam" id="TIGR00728">
    <property type="entry name" value="OPT_sfam"/>
    <property type="match status" value="1"/>
</dbReference>
<dbReference type="PANTHER" id="PTHR22601">
    <property type="entry name" value="ISP4 LIKE PROTEIN"/>
    <property type="match status" value="1"/>
</dbReference>
<dbReference type="Pfam" id="PF03169">
    <property type="entry name" value="OPT"/>
    <property type="match status" value="1"/>
</dbReference>
<accession>O23482</accession>
<accession>F4JLS9</accession>
<accession>Q8H0V0</accession>
<accession>Q940I5</accession>